<dbReference type="EMBL" id="CR522870">
    <property type="protein sequence ID" value="CAG37687.1"/>
    <property type="molecule type" value="Genomic_DNA"/>
</dbReference>
<dbReference type="RefSeq" id="WP_011190199.1">
    <property type="nucleotide sequence ID" value="NC_006138.1"/>
</dbReference>
<dbReference type="SMR" id="Q6AIZ3"/>
<dbReference type="STRING" id="177439.DP2958"/>
<dbReference type="KEGG" id="dps:DP2958"/>
<dbReference type="eggNOG" id="COG0468">
    <property type="taxonomic scope" value="Bacteria"/>
</dbReference>
<dbReference type="HOGENOM" id="CLU_040469_3_2_7"/>
<dbReference type="OrthoDB" id="9776733at2"/>
<dbReference type="Proteomes" id="UP000000602">
    <property type="component" value="Chromosome"/>
</dbReference>
<dbReference type="GO" id="GO:0005829">
    <property type="term" value="C:cytosol"/>
    <property type="evidence" value="ECO:0007669"/>
    <property type="project" value="TreeGrafter"/>
</dbReference>
<dbReference type="GO" id="GO:0005524">
    <property type="term" value="F:ATP binding"/>
    <property type="evidence" value="ECO:0007669"/>
    <property type="project" value="UniProtKB-UniRule"/>
</dbReference>
<dbReference type="GO" id="GO:0016887">
    <property type="term" value="F:ATP hydrolysis activity"/>
    <property type="evidence" value="ECO:0007669"/>
    <property type="project" value="InterPro"/>
</dbReference>
<dbReference type="GO" id="GO:0140664">
    <property type="term" value="F:ATP-dependent DNA damage sensor activity"/>
    <property type="evidence" value="ECO:0007669"/>
    <property type="project" value="InterPro"/>
</dbReference>
<dbReference type="GO" id="GO:0003684">
    <property type="term" value="F:damaged DNA binding"/>
    <property type="evidence" value="ECO:0007669"/>
    <property type="project" value="UniProtKB-UniRule"/>
</dbReference>
<dbReference type="GO" id="GO:0003697">
    <property type="term" value="F:single-stranded DNA binding"/>
    <property type="evidence" value="ECO:0007669"/>
    <property type="project" value="UniProtKB-UniRule"/>
</dbReference>
<dbReference type="GO" id="GO:0006310">
    <property type="term" value="P:DNA recombination"/>
    <property type="evidence" value="ECO:0007669"/>
    <property type="project" value="UniProtKB-UniRule"/>
</dbReference>
<dbReference type="GO" id="GO:0006281">
    <property type="term" value="P:DNA repair"/>
    <property type="evidence" value="ECO:0007669"/>
    <property type="project" value="UniProtKB-UniRule"/>
</dbReference>
<dbReference type="GO" id="GO:0009432">
    <property type="term" value="P:SOS response"/>
    <property type="evidence" value="ECO:0007669"/>
    <property type="project" value="UniProtKB-UniRule"/>
</dbReference>
<dbReference type="CDD" id="cd00983">
    <property type="entry name" value="RecA"/>
    <property type="match status" value="1"/>
</dbReference>
<dbReference type="FunFam" id="3.40.50.300:FF:000087">
    <property type="entry name" value="Recombinase RecA"/>
    <property type="match status" value="1"/>
</dbReference>
<dbReference type="Gene3D" id="3.40.50.300">
    <property type="entry name" value="P-loop containing nucleotide triphosphate hydrolases"/>
    <property type="match status" value="1"/>
</dbReference>
<dbReference type="HAMAP" id="MF_00268">
    <property type="entry name" value="RecA"/>
    <property type="match status" value="1"/>
</dbReference>
<dbReference type="InterPro" id="IPR003593">
    <property type="entry name" value="AAA+_ATPase"/>
</dbReference>
<dbReference type="InterPro" id="IPR013765">
    <property type="entry name" value="DNA_recomb/repair_RecA"/>
</dbReference>
<dbReference type="InterPro" id="IPR027417">
    <property type="entry name" value="P-loop_NTPase"/>
</dbReference>
<dbReference type="InterPro" id="IPR049261">
    <property type="entry name" value="RecA-like_C"/>
</dbReference>
<dbReference type="InterPro" id="IPR049428">
    <property type="entry name" value="RecA-like_N"/>
</dbReference>
<dbReference type="InterPro" id="IPR020588">
    <property type="entry name" value="RecA_ATP-bd"/>
</dbReference>
<dbReference type="InterPro" id="IPR023400">
    <property type="entry name" value="RecA_C_sf"/>
</dbReference>
<dbReference type="InterPro" id="IPR020587">
    <property type="entry name" value="RecA_monomer-monomer_interface"/>
</dbReference>
<dbReference type="NCBIfam" id="TIGR02012">
    <property type="entry name" value="tigrfam_recA"/>
    <property type="match status" value="1"/>
</dbReference>
<dbReference type="PANTHER" id="PTHR45900:SF1">
    <property type="entry name" value="MITOCHONDRIAL DNA REPAIR PROTEIN RECA HOMOLOG-RELATED"/>
    <property type="match status" value="1"/>
</dbReference>
<dbReference type="PANTHER" id="PTHR45900">
    <property type="entry name" value="RECA"/>
    <property type="match status" value="1"/>
</dbReference>
<dbReference type="Pfam" id="PF00154">
    <property type="entry name" value="RecA"/>
    <property type="match status" value="1"/>
</dbReference>
<dbReference type="Pfam" id="PF21096">
    <property type="entry name" value="RecA_C"/>
    <property type="match status" value="1"/>
</dbReference>
<dbReference type="PRINTS" id="PR00142">
    <property type="entry name" value="RECA"/>
</dbReference>
<dbReference type="SMART" id="SM00382">
    <property type="entry name" value="AAA"/>
    <property type="match status" value="1"/>
</dbReference>
<dbReference type="SUPFAM" id="SSF52540">
    <property type="entry name" value="P-loop containing nucleoside triphosphate hydrolases"/>
    <property type="match status" value="1"/>
</dbReference>
<dbReference type="SUPFAM" id="SSF54752">
    <property type="entry name" value="RecA protein, C-terminal domain"/>
    <property type="match status" value="1"/>
</dbReference>
<dbReference type="PROSITE" id="PS50162">
    <property type="entry name" value="RECA_2"/>
    <property type="match status" value="1"/>
</dbReference>
<dbReference type="PROSITE" id="PS50163">
    <property type="entry name" value="RECA_3"/>
    <property type="match status" value="1"/>
</dbReference>
<protein>
    <recommendedName>
        <fullName evidence="1">Protein RecA</fullName>
    </recommendedName>
    <alternativeName>
        <fullName evidence="1">Recombinase A</fullName>
    </alternativeName>
</protein>
<keyword id="KW-0067">ATP-binding</keyword>
<keyword id="KW-0963">Cytoplasm</keyword>
<keyword id="KW-0227">DNA damage</keyword>
<keyword id="KW-0233">DNA recombination</keyword>
<keyword id="KW-0234">DNA repair</keyword>
<keyword id="KW-0238">DNA-binding</keyword>
<keyword id="KW-0547">Nucleotide-binding</keyword>
<keyword id="KW-1185">Reference proteome</keyword>
<keyword id="KW-0742">SOS response</keyword>
<comment type="function">
    <text evidence="1">Can catalyze the hydrolysis of ATP in the presence of single-stranded DNA, the ATP-dependent uptake of single-stranded DNA by duplex DNA, and the ATP-dependent hybridization of homologous single-stranded DNAs. It interacts with LexA causing its activation and leading to its autocatalytic cleavage.</text>
</comment>
<comment type="subcellular location">
    <subcellularLocation>
        <location evidence="1">Cytoplasm</location>
    </subcellularLocation>
</comment>
<comment type="similarity">
    <text evidence="1">Belongs to the RecA family.</text>
</comment>
<gene>
    <name evidence="1" type="primary">recA</name>
    <name type="ordered locus">DP2958</name>
</gene>
<reference key="1">
    <citation type="journal article" date="2004" name="Environ. Microbiol.">
        <title>The genome of Desulfotalea psychrophila, a sulfate-reducing bacterium from permanently cold Arctic sediments.</title>
        <authorList>
            <person name="Rabus R."/>
            <person name="Ruepp A."/>
            <person name="Frickey T."/>
            <person name="Rattei T."/>
            <person name="Fartmann B."/>
            <person name="Stark M."/>
            <person name="Bauer M."/>
            <person name="Zibat A."/>
            <person name="Lombardot T."/>
            <person name="Becker I."/>
            <person name="Amann J."/>
            <person name="Gellner K."/>
            <person name="Teeling H."/>
            <person name="Leuschner W.D."/>
            <person name="Gloeckner F.-O."/>
            <person name="Lupas A.N."/>
            <person name="Amann R."/>
            <person name="Klenk H.-P."/>
        </authorList>
    </citation>
    <scope>NUCLEOTIDE SEQUENCE [LARGE SCALE GENOMIC DNA]</scope>
    <source>
        <strain>DSM 12343 / LSv54</strain>
    </source>
</reference>
<name>RECA_DESPS</name>
<organism>
    <name type="scientific">Desulfotalea psychrophila (strain LSv54 / DSM 12343)</name>
    <dbReference type="NCBI Taxonomy" id="177439"/>
    <lineage>
        <taxon>Bacteria</taxon>
        <taxon>Pseudomonadati</taxon>
        <taxon>Thermodesulfobacteriota</taxon>
        <taxon>Desulfobulbia</taxon>
        <taxon>Desulfobulbales</taxon>
        <taxon>Desulfocapsaceae</taxon>
        <taxon>Desulfotalea</taxon>
    </lineage>
</organism>
<proteinExistence type="inferred from homology"/>
<sequence>MVGATAKDKAGSVENAISQIQKQFGKGSIMRLGEQALEAIPVISTGALSLDIALGVGGLPKGRMTEIYGPESSGKTTLALHVVAEAQKLGGIAAFIDAEHALDTAYAEKLGVNIDNLLVSQPDFGEQALEIAEILIRSGGVDIIVVDSVAALTPKAEIDGNVGDVHVGLQARLMSQAMRKFAGVLNRSNTVLIFINQIRMKIGVMFGSPETTTGGNALKFYCSERLDIRRIGAIKDGQEITGNRTRVKVVKNKVAPPFKIAEFDIIYGEGISKIGDMFDLAVGLDIIDKSGSWYSYKNERIGQGRENSKQFLMDTPAICHEIEEKVRSAYGLPDREETKREETAQIPDTEKTKDV</sequence>
<feature type="chain" id="PRO_0000122701" description="Protein RecA">
    <location>
        <begin position="1"/>
        <end position="355"/>
    </location>
</feature>
<feature type="region of interest" description="Disordered" evidence="2">
    <location>
        <begin position="329"/>
        <end position="355"/>
    </location>
</feature>
<feature type="binding site" evidence="1">
    <location>
        <begin position="69"/>
        <end position="76"/>
    </location>
    <ligand>
        <name>ATP</name>
        <dbReference type="ChEBI" id="CHEBI:30616"/>
    </ligand>
</feature>
<accession>Q6AIZ3</accession>
<evidence type="ECO:0000255" key="1">
    <source>
        <dbReference type="HAMAP-Rule" id="MF_00268"/>
    </source>
</evidence>
<evidence type="ECO:0000256" key="2">
    <source>
        <dbReference type="SAM" id="MobiDB-lite"/>
    </source>
</evidence>